<keyword id="KW-0614">Plasmid</keyword>
<accession>Q1R1Y6</accession>
<protein>
    <recommendedName>
        <fullName>Uncharacterized protein YuaU</fullName>
    </recommendedName>
</protein>
<gene>
    <name type="primary">yuaU</name>
    <name type="synonym">ydiA</name>
    <name type="ordered locus">UTI89_P052</name>
</gene>
<feature type="chain" id="PRO_0000267226" description="Uncharacterized protein YuaU">
    <location>
        <begin position="1"/>
        <end position="213"/>
    </location>
</feature>
<reference key="1">
    <citation type="journal article" date="2006" name="Proc. Natl. Acad. Sci. U.S.A.">
        <title>Identification of genes subject to positive selection in uropathogenic strains of Escherichia coli: a comparative genomics approach.</title>
        <authorList>
            <person name="Chen S.L."/>
            <person name="Hung C.-S."/>
            <person name="Xu J."/>
            <person name="Reigstad C.S."/>
            <person name="Magrini V."/>
            <person name="Sabo A."/>
            <person name="Blasiar D."/>
            <person name="Bieri T."/>
            <person name="Meyer R.R."/>
            <person name="Ozersky P."/>
            <person name="Armstrong J.R."/>
            <person name="Fulton R.S."/>
            <person name="Latreille J.P."/>
            <person name="Spieth J."/>
            <person name="Hooton T.M."/>
            <person name="Mardis E.R."/>
            <person name="Hultgren S.J."/>
            <person name="Gordon J.I."/>
        </authorList>
    </citation>
    <scope>NUCLEOTIDE SEQUENCE [LARGE SCALE GENOMIC DNA]</scope>
    <source>
        <strain>UTI89 / UPEC</strain>
    </source>
</reference>
<dbReference type="EMBL" id="CP000244">
    <property type="protein sequence ID" value="ABE10628.1"/>
    <property type="molecule type" value="Genomic_DNA"/>
</dbReference>
<dbReference type="RefSeq" id="WP_000990667.1">
    <property type="nucleotide sequence ID" value="NC_007941.1"/>
</dbReference>
<dbReference type="KEGG" id="eci:UTI89_P052"/>
<dbReference type="HOGENOM" id="CLU_1292770_0_0_6"/>
<dbReference type="Proteomes" id="UP000001952">
    <property type="component" value="Plasmid pUTI89"/>
</dbReference>
<geneLocation type="plasmid">
    <name>pUTI89</name>
</geneLocation>
<organism>
    <name type="scientific">Escherichia coli (strain UTI89 / UPEC)</name>
    <dbReference type="NCBI Taxonomy" id="364106"/>
    <lineage>
        <taxon>Bacteria</taxon>
        <taxon>Pseudomonadati</taxon>
        <taxon>Pseudomonadota</taxon>
        <taxon>Gammaproteobacteria</taxon>
        <taxon>Enterobacterales</taxon>
        <taxon>Enterobacteriaceae</taxon>
        <taxon>Escherichia</taxon>
    </lineage>
</organism>
<sequence>MNADTWTRLQAFRHALELTSCEASLTAGYDHLKDFPAGCSELASQTLTDYLTEDGSNLYSCIVGMQWDNGPGRYGHVIADPARDYIDLTLDQFPGYHNRIVAEPVESGGQLAADLNREPAISTADGIVASPSDKVNYITEQKNRQPMVIITECYKLIRMTARFIPMCQSSQLFQHQVFPRLFIISDVGSCSLFRNTLDRLATDWKVTLSILSL</sequence>
<name>YUAU_ECOUT</name>
<proteinExistence type="predicted"/>